<evidence type="ECO:0000255" key="1">
    <source>
        <dbReference type="HAMAP-Rule" id="MF_01342"/>
    </source>
</evidence>
<evidence type="ECO:0000256" key="2">
    <source>
        <dbReference type="SAM" id="MobiDB-lite"/>
    </source>
</evidence>
<evidence type="ECO:0000305" key="3"/>
<reference key="1">
    <citation type="journal article" date="2001" name="Lancet">
        <title>Whole genome sequencing of meticillin-resistant Staphylococcus aureus.</title>
        <authorList>
            <person name="Kuroda M."/>
            <person name="Ohta T."/>
            <person name="Uchiyama I."/>
            <person name="Baba T."/>
            <person name="Yuzawa H."/>
            <person name="Kobayashi I."/>
            <person name="Cui L."/>
            <person name="Oguchi A."/>
            <person name="Aoki K."/>
            <person name="Nagai Y."/>
            <person name="Lian J.-Q."/>
            <person name="Ito T."/>
            <person name="Kanamori M."/>
            <person name="Matsumaru H."/>
            <person name="Maruyama A."/>
            <person name="Murakami H."/>
            <person name="Hosoyama A."/>
            <person name="Mizutani-Ui Y."/>
            <person name="Takahashi N.K."/>
            <person name="Sawano T."/>
            <person name="Inoue R."/>
            <person name="Kaito C."/>
            <person name="Sekimizu K."/>
            <person name="Hirakawa H."/>
            <person name="Kuhara S."/>
            <person name="Goto S."/>
            <person name="Yabuzaki J."/>
            <person name="Kanehisa M."/>
            <person name="Yamashita A."/>
            <person name="Oshima K."/>
            <person name="Furuya K."/>
            <person name="Yoshino C."/>
            <person name="Shiba T."/>
            <person name="Hattori M."/>
            <person name="Ogasawara N."/>
            <person name="Hayashi H."/>
            <person name="Hiramatsu K."/>
        </authorList>
    </citation>
    <scope>NUCLEOTIDE SEQUENCE [LARGE SCALE GENOMIC DNA]</scope>
    <source>
        <strain>N315</strain>
    </source>
</reference>
<reference key="2">
    <citation type="submission" date="2007-10" db="UniProtKB">
        <title>Shotgun proteomic analysis of total and membrane protein extracts of S. aureus strain N315.</title>
        <authorList>
            <person name="Vaezzadeh A.R."/>
            <person name="Deshusses J."/>
            <person name="Lescuyer P."/>
            <person name="Hochstrasser D.F."/>
        </authorList>
    </citation>
    <scope>IDENTIFICATION BY MASS SPECTROMETRY [LARGE SCALE ANALYSIS]</scope>
    <source>
        <strain>N315</strain>
    </source>
</reference>
<organism>
    <name type="scientific">Staphylococcus aureus (strain N315)</name>
    <dbReference type="NCBI Taxonomy" id="158879"/>
    <lineage>
        <taxon>Bacteria</taxon>
        <taxon>Bacillati</taxon>
        <taxon>Bacillota</taxon>
        <taxon>Bacilli</taxon>
        <taxon>Bacillales</taxon>
        <taxon>Staphylococcaceae</taxon>
        <taxon>Staphylococcus</taxon>
    </lineage>
</organism>
<keyword id="KW-0687">Ribonucleoprotein</keyword>
<keyword id="KW-0689">Ribosomal protein</keyword>
<keyword id="KW-0694">RNA-binding</keyword>
<keyword id="KW-0699">rRNA-binding</keyword>
<keyword id="KW-0820">tRNA-binding</keyword>
<name>RL16_STAAN</name>
<accession>Q7A461</accession>
<dbReference type="EMBL" id="BA000018">
    <property type="protein sequence ID" value="BAB43335.1"/>
    <property type="molecule type" value="Genomic_DNA"/>
</dbReference>
<dbReference type="PIR" id="F90021">
    <property type="entry name" value="F90021"/>
</dbReference>
<dbReference type="RefSeq" id="WP_000926310.1">
    <property type="nucleotide sequence ID" value="NC_002745.2"/>
</dbReference>
<dbReference type="SMR" id="Q7A461"/>
<dbReference type="EnsemblBacteria" id="BAB43335">
    <property type="protein sequence ID" value="BAB43335"/>
    <property type="gene ID" value="BAB43335"/>
</dbReference>
<dbReference type="GeneID" id="98346555"/>
<dbReference type="KEGG" id="sau:SA2040"/>
<dbReference type="HOGENOM" id="CLU_078858_2_1_9"/>
<dbReference type="GO" id="GO:0022625">
    <property type="term" value="C:cytosolic large ribosomal subunit"/>
    <property type="evidence" value="ECO:0007669"/>
    <property type="project" value="TreeGrafter"/>
</dbReference>
<dbReference type="GO" id="GO:0019843">
    <property type="term" value="F:rRNA binding"/>
    <property type="evidence" value="ECO:0007669"/>
    <property type="project" value="UniProtKB-UniRule"/>
</dbReference>
<dbReference type="GO" id="GO:0003735">
    <property type="term" value="F:structural constituent of ribosome"/>
    <property type="evidence" value="ECO:0007669"/>
    <property type="project" value="InterPro"/>
</dbReference>
<dbReference type="GO" id="GO:0000049">
    <property type="term" value="F:tRNA binding"/>
    <property type="evidence" value="ECO:0007669"/>
    <property type="project" value="UniProtKB-KW"/>
</dbReference>
<dbReference type="GO" id="GO:0006412">
    <property type="term" value="P:translation"/>
    <property type="evidence" value="ECO:0007669"/>
    <property type="project" value="UniProtKB-UniRule"/>
</dbReference>
<dbReference type="CDD" id="cd01433">
    <property type="entry name" value="Ribosomal_L16_L10e"/>
    <property type="match status" value="1"/>
</dbReference>
<dbReference type="FunFam" id="3.90.1170.10:FF:000001">
    <property type="entry name" value="50S ribosomal protein L16"/>
    <property type="match status" value="1"/>
</dbReference>
<dbReference type="Gene3D" id="3.90.1170.10">
    <property type="entry name" value="Ribosomal protein L10e/L16"/>
    <property type="match status" value="1"/>
</dbReference>
<dbReference type="HAMAP" id="MF_01342">
    <property type="entry name" value="Ribosomal_uL16"/>
    <property type="match status" value="1"/>
</dbReference>
<dbReference type="InterPro" id="IPR047873">
    <property type="entry name" value="Ribosomal_uL16"/>
</dbReference>
<dbReference type="InterPro" id="IPR000114">
    <property type="entry name" value="Ribosomal_uL16_bact-type"/>
</dbReference>
<dbReference type="InterPro" id="IPR020798">
    <property type="entry name" value="Ribosomal_uL16_CS"/>
</dbReference>
<dbReference type="InterPro" id="IPR016180">
    <property type="entry name" value="Ribosomal_uL16_dom"/>
</dbReference>
<dbReference type="InterPro" id="IPR036920">
    <property type="entry name" value="Ribosomal_uL16_sf"/>
</dbReference>
<dbReference type="NCBIfam" id="TIGR01164">
    <property type="entry name" value="rplP_bact"/>
    <property type="match status" value="1"/>
</dbReference>
<dbReference type="PANTHER" id="PTHR12220">
    <property type="entry name" value="50S/60S RIBOSOMAL PROTEIN L16"/>
    <property type="match status" value="1"/>
</dbReference>
<dbReference type="PANTHER" id="PTHR12220:SF13">
    <property type="entry name" value="LARGE RIBOSOMAL SUBUNIT PROTEIN UL16M"/>
    <property type="match status" value="1"/>
</dbReference>
<dbReference type="Pfam" id="PF00252">
    <property type="entry name" value="Ribosomal_L16"/>
    <property type="match status" value="1"/>
</dbReference>
<dbReference type="PRINTS" id="PR00060">
    <property type="entry name" value="RIBOSOMALL16"/>
</dbReference>
<dbReference type="SUPFAM" id="SSF54686">
    <property type="entry name" value="Ribosomal protein L16p/L10e"/>
    <property type="match status" value="1"/>
</dbReference>
<dbReference type="PROSITE" id="PS00586">
    <property type="entry name" value="RIBOSOMAL_L16_1"/>
    <property type="match status" value="1"/>
</dbReference>
<dbReference type="PROSITE" id="PS00701">
    <property type="entry name" value="RIBOSOMAL_L16_2"/>
    <property type="match status" value="1"/>
</dbReference>
<sequence length="144" mass="16242">MLLPKRVKYRRQHRPKTTGRSKGGNYVTFGEFGLQATTTSWITSRQIESARIAMTRYMKRGGKVWIKIFPHTPYTKKPLEVRMGAGKGAVEGWIAVVKPGRILFEVAGVSEEVAREALRLASHKLPVKTKFVKREELGGETNES</sequence>
<gene>
    <name evidence="1" type="primary">rplP</name>
    <name type="ordered locus">SA2040</name>
</gene>
<feature type="chain" id="PRO_0000062208" description="Large ribosomal subunit protein uL16">
    <location>
        <begin position="1"/>
        <end position="144"/>
    </location>
</feature>
<feature type="region of interest" description="Disordered" evidence="2">
    <location>
        <begin position="1"/>
        <end position="23"/>
    </location>
</feature>
<feature type="compositionally biased region" description="Basic residues" evidence="2">
    <location>
        <begin position="1"/>
        <end position="19"/>
    </location>
</feature>
<protein>
    <recommendedName>
        <fullName evidence="1">Large ribosomal subunit protein uL16</fullName>
    </recommendedName>
    <alternativeName>
        <fullName evidence="3">50S ribosomal protein L16</fullName>
    </alternativeName>
</protein>
<comment type="function">
    <text evidence="1">Binds 23S rRNA and is also seen to make contacts with the A and possibly P site tRNAs.</text>
</comment>
<comment type="subunit">
    <text evidence="1">Part of the 50S ribosomal subunit.</text>
</comment>
<comment type="similarity">
    <text evidence="1">Belongs to the universal ribosomal protein uL16 family.</text>
</comment>
<proteinExistence type="evidence at protein level"/>